<dbReference type="EMBL" id="CP000949">
    <property type="protein sequence ID" value="ACA75236.1"/>
    <property type="molecule type" value="Genomic_DNA"/>
</dbReference>
<dbReference type="SMR" id="B1JE13"/>
<dbReference type="STRING" id="390235.PputW619_4760"/>
<dbReference type="KEGG" id="ppw:PputW619_4760"/>
<dbReference type="eggNOG" id="COG0080">
    <property type="taxonomic scope" value="Bacteria"/>
</dbReference>
<dbReference type="HOGENOM" id="CLU_074237_2_0_6"/>
<dbReference type="OrthoDB" id="9802408at2"/>
<dbReference type="GO" id="GO:0022625">
    <property type="term" value="C:cytosolic large ribosomal subunit"/>
    <property type="evidence" value="ECO:0007669"/>
    <property type="project" value="TreeGrafter"/>
</dbReference>
<dbReference type="GO" id="GO:0070180">
    <property type="term" value="F:large ribosomal subunit rRNA binding"/>
    <property type="evidence" value="ECO:0007669"/>
    <property type="project" value="UniProtKB-UniRule"/>
</dbReference>
<dbReference type="GO" id="GO:0003735">
    <property type="term" value="F:structural constituent of ribosome"/>
    <property type="evidence" value="ECO:0007669"/>
    <property type="project" value="InterPro"/>
</dbReference>
<dbReference type="GO" id="GO:0006412">
    <property type="term" value="P:translation"/>
    <property type="evidence" value="ECO:0007669"/>
    <property type="project" value="UniProtKB-UniRule"/>
</dbReference>
<dbReference type="CDD" id="cd00349">
    <property type="entry name" value="Ribosomal_L11"/>
    <property type="match status" value="1"/>
</dbReference>
<dbReference type="FunFam" id="1.10.10.250:FF:000001">
    <property type="entry name" value="50S ribosomal protein L11"/>
    <property type="match status" value="1"/>
</dbReference>
<dbReference type="FunFam" id="3.30.1550.10:FF:000001">
    <property type="entry name" value="50S ribosomal protein L11"/>
    <property type="match status" value="1"/>
</dbReference>
<dbReference type="Gene3D" id="1.10.10.250">
    <property type="entry name" value="Ribosomal protein L11, C-terminal domain"/>
    <property type="match status" value="1"/>
</dbReference>
<dbReference type="Gene3D" id="3.30.1550.10">
    <property type="entry name" value="Ribosomal protein L11/L12, N-terminal domain"/>
    <property type="match status" value="1"/>
</dbReference>
<dbReference type="HAMAP" id="MF_00736">
    <property type="entry name" value="Ribosomal_uL11"/>
    <property type="match status" value="1"/>
</dbReference>
<dbReference type="InterPro" id="IPR000911">
    <property type="entry name" value="Ribosomal_uL11"/>
</dbReference>
<dbReference type="InterPro" id="IPR006519">
    <property type="entry name" value="Ribosomal_uL11_bac-typ"/>
</dbReference>
<dbReference type="InterPro" id="IPR020783">
    <property type="entry name" value="Ribosomal_uL11_C"/>
</dbReference>
<dbReference type="InterPro" id="IPR036769">
    <property type="entry name" value="Ribosomal_uL11_C_sf"/>
</dbReference>
<dbReference type="InterPro" id="IPR020785">
    <property type="entry name" value="Ribosomal_uL11_CS"/>
</dbReference>
<dbReference type="InterPro" id="IPR020784">
    <property type="entry name" value="Ribosomal_uL11_N"/>
</dbReference>
<dbReference type="InterPro" id="IPR036796">
    <property type="entry name" value="Ribosomal_uL11_N_sf"/>
</dbReference>
<dbReference type="NCBIfam" id="TIGR01632">
    <property type="entry name" value="L11_bact"/>
    <property type="match status" value="1"/>
</dbReference>
<dbReference type="PANTHER" id="PTHR11661">
    <property type="entry name" value="60S RIBOSOMAL PROTEIN L12"/>
    <property type="match status" value="1"/>
</dbReference>
<dbReference type="PANTHER" id="PTHR11661:SF1">
    <property type="entry name" value="LARGE RIBOSOMAL SUBUNIT PROTEIN UL11M"/>
    <property type="match status" value="1"/>
</dbReference>
<dbReference type="Pfam" id="PF00298">
    <property type="entry name" value="Ribosomal_L11"/>
    <property type="match status" value="1"/>
</dbReference>
<dbReference type="Pfam" id="PF03946">
    <property type="entry name" value="Ribosomal_L11_N"/>
    <property type="match status" value="1"/>
</dbReference>
<dbReference type="SMART" id="SM00649">
    <property type="entry name" value="RL11"/>
    <property type="match status" value="1"/>
</dbReference>
<dbReference type="SUPFAM" id="SSF54747">
    <property type="entry name" value="Ribosomal L11/L12e N-terminal domain"/>
    <property type="match status" value="1"/>
</dbReference>
<dbReference type="SUPFAM" id="SSF46906">
    <property type="entry name" value="Ribosomal protein L11, C-terminal domain"/>
    <property type="match status" value="1"/>
</dbReference>
<dbReference type="PROSITE" id="PS00359">
    <property type="entry name" value="RIBOSOMAL_L11"/>
    <property type="match status" value="1"/>
</dbReference>
<name>RL11_PSEPW</name>
<organism>
    <name type="scientific">Pseudomonas putida (strain W619)</name>
    <dbReference type="NCBI Taxonomy" id="390235"/>
    <lineage>
        <taxon>Bacteria</taxon>
        <taxon>Pseudomonadati</taxon>
        <taxon>Pseudomonadota</taxon>
        <taxon>Gammaproteobacteria</taxon>
        <taxon>Pseudomonadales</taxon>
        <taxon>Pseudomonadaceae</taxon>
        <taxon>Pseudomonas</taxon>
    </lineage>
</organism>
<feature type="chain" id="PRO_1000195695" description="Large ribosomal subunit protein uL11">
    <location>
        <begin position="1"/>
        <end position="143"/>
    </location>
</feature>
<protein>
    <recommendedName>
        <fullName evidence="1">Large ribosomal subunit protein uL11</fullName>
    </recommendedName>
    <alternativeName>
        <fullName evidence="2">50S ribosomal protein L11</fullName>
    </alternativeName>
</protein>
<proteinExistence type="inferred from homology"/>
<evidence type="ECO:0000255" key="1">
    <source>
        <dbReference type="HAMAP-Rule" id="MF_00736"/>
    </source>
</evidence>
<evidence type="ECO:0000305" key="2"/>
<gene>
    <name evidence="1" type="primary">rplK</name>
    <name type="ordered locus">PputW619_4760</name>
</gene>
<comment type="function">
    <text evidence="1">Forms part of the ribosomal stalk which helps the ribosome interact with GTP-bound translation factors.</text>
</comment>
<comment type="subunit">
    <text evidence="1">Part of the ribosomal stalk of the 50S ribosomal subunit. Interacts with L10 and the large rRNA to form the base of the stalk. L10 forms an elongated spine to which L12 dimers bind in a sequential fashion forming a multimeric L10(L12)X complex.</text>
</comment>
<comment type="PTM">
    <text evidence="1">One or more lysine residues are methylated.</text>
</comment>
<comment type="similarity">
    <text evidence="1">Belongs to the universal ribosomal protein uL11 family.</text>
</comment>
<accession>B1JE13</accession>
<sequence length="143" mass="14866">MAKKIQAYIKLQVKAGQANPSPPVGPALGQHGVNIMEFCKAFNARTQGQEAGLPTPVIITVYSDRSFTFETKSTPASVLLKKAAGLTSGSARPNTVKVGTVTRAQLEDIAKAKQADLTAADLDAAVRTIAGSARSMGLNVEGV</sequence>
<reference key="1">
    <citation type="submission" date="2008-02" db="EMBL/GenBank/DDBJ databases">
        <title>Complete sequence of Pseudomonas putida W619.</title>
        <authorList>
            <person name="Copeland A."/>
            <person name="Lucas S."/>
            <person name="Lapidus A."/>
            <person name="Barry K."/>
            <person name="Detter J.C."/>
            <person name="Glavina del Rio T."/>
            <person name="Dalin E."/>
            <person name="Tice H."/>
            <person name="Pitluck S."/>
            <person name="Chain P."/>
            <person name="Malfatti S."/>
            <person name="Shin M."/>
            <person name="Vergez L."/>
            <person name="Schmutz J."/>
            <person name="Larimer F."/>
            <person name="Land M."/>
            <person name="Hauser L."/>
            <person name="Kyrpides N."/>
            <person name="Kim E."/>
            <person name="Taghavi S."/>
            <person name="Vangronsveld D."/>
            <person name="van der Lelie D."/>
            <person name="Richardson P."/>
        </authorList>
    </citation>
    <scope>NUCLEOTIDE SEQUENCE [LARGE SCALE GENOMIC DNA]</scope>
    <source>
        <strain>W619</strain>
    </source>
</reference>
<keyword id="KW-0488">Methylation</keyword>
<keyword id="KW-0687">Ribonucleoprotein</keyword>
<keyword id="KW-0689">Ribosomal protein</keyword>
<keyword id="KW-0694">RNA-binding</keyword>
<keyword id="KW-0699">rRNA-binding</keyword>